<keyword id="KW-1185">Reference proteome</keyword>
<keyword id="KW-0687">Ribonucleoprotein</keyword>
<keyword id="KW-0689">Ribosomal protein</keyword>
<keyword id="KW-0694">RNA-binding</keyword>
<keyword id="KW-0699">rRNA-binding</keyword>
<sequence length="177" mass="18890">MSQREKKNQEAVYESESEFIEKLVAIKRTAKVVKGGSRFNFSAIVVVGDGKGSVGYGLGKAKEVPEAIRKATDQAQKQMIKVEIKDGRTIFHETIGRFGAGNVVLRPASAGTGIIAGGSMRPIFEAIGISDVLAKSTGTSNPHNLIKATFAALQNISPPKRVAAKRGLAAKNVRIRD</sequence>
<protein>
    <recommendedName>
        <fullName evidence="1">Small ribosomal subunit protein uS5</fullName>
    </recommendedName>
    <alternativeName>
        <fullName evidence="2">30S ribosomal protein S5</fullName>
    </alternativeName>
</protein>
<evidence type="ECO:0000255" key="1">
    <source>
        <dbReference type="HAMAP-Rule" id="MF_01307"/>
    </source>
</evidence>
<evidence type="ECO:0000305" key="2"/>
<proteinExistence type="inferred from homology"/>
<gene>
    <name evidence="1" type="primary">rpsE</name>
    <name type="ordered locus">Mmc1_0864</name>
</gene>
<accession>A0L5Z0</accession>
<dbReference type="EMBL" id="CP000471">
    <property type="protein sequence ID" value="ABK43383.1"/>
    <property type="molecule type" value="Genomic_DNA"/>
</dbReference>
<dbReference type="RefSeq" id="WP_011712542.1">
    <property type="nucleotide sequence ID" value="NC_008576.1"/>
</dbReference>
<dbReference type="SMR" id="A0L5Z0"/>
<dbReference type="STRING" id="156889.Mmc1_0864"/>
<dbReference type="KEGG" id="mgm:Mmc1_0864"/>
<dbReference type="eggNOG" id="COG0098">
    <property type="taxonomic scope" value="Bacteria"/>
</dbReference>
<dbReference type="HOGENOM" id="CLU_065898_2_2_5"/>
<dbReference type="OrthoDB" id="9809045at2"/>
<dbReference type="Proteomes" id="UP000002586">
    <property type="component" value="Chromosome"/>
</dbReference>
<dbReference type="GO" id="GO:0015935">
    <property type="term" value="C:small ribosomal subunit"/>
    <property type="evidence" value="ECO:0007669"/>
    <property type="project" value="InterPro"/>
</dbReference>
<dbReference type="GO" id="GO:0019843">
    <property type="term" value="F:rRNA binding"/>
    <property type="evidence" value="ECO:0007669"/>
    <property type="project" value="UniProtKB-UniRule"/>
</dbReference>
<dbReference type="GO" id="GO:0003735">
    <property type="term" value="F:structural constituent of ribosome"/>
    <property type="evidence" value="ECO:0007669"/>
    <property type="project" value="InterPro"/>
</dbReference>
<dbReference type="GO" id="GO:0006412">
    <property type="term" value="P:translation"/>
    <property type="evidence" value="ECO:0007669"/>
    <property type="project" value="UniProtKB-UniRule"/>
</dbReference>
<dbReference type="FunFam" id="3.30.160.20:FF:000001">
    <property type="entry name" value="30S ribosomal protein S5"/>
    <property type="match status" value="1"/>
</dbReference>
<dbReference type="FunFam" id="3.30.230.10:FF:000002">
    <property type="entry name" value="30S ribosomal protein S5"/>
    <property type="match status" value="1"/>
</dbReference>
<dbReference type="Gene3D" id="3.30.160.20">
    <property type="match status" value="1"/>
</dbReference>
<dbReference type="Gene3D" id="3.30.230.10">
    <property type="match status" value="1"/>
</dbReference>
<dbReference type="HAMAP" id="MF_01307_B">
    <property type="entry name" value="Ribosomal_uS5_B"/>
    <property type="match status" value="1"/>
</dbReference>
<dbReference type="InterPro" id="IPR020568">
    <property type="entry name" value="Ribosomal_Su5_D2-typ_SF"/>
</dbReference>
<dbReference type="InterPro" id="IPR000851">
    <property type="entry name" value="Ribosomal_uS5"/>
</dbReference>
<dbReference type="InterPro" id="IPR005712">
    <property type="entry name" value="Ribosomal_uS5_bac-type"/>
</dbReference>
<dbReference type="InterPro" id="IPR005324">
    <property type="entry name" value="Ribosomal_uS5_C"/>
</dbReference>
<dbReference type="InterPro" id="IPR013810">
    <property type="entry name" value="Ribosomal_uS5_N"/>
</dbReference>
<dbReference type="InterPro" id="IPR014721">
    <property type="entry name" value="Ribsml_uS5_D2-typ_fold_subgr"/>
</dbReference>
<dbReference type="NCBIfam" id="TIGR01021">
    <property type="entry name" value="rpsE_bact"/>
    <property type="match status" value="1"/>
</dbReference>
<dbReference type="PANTHER" id="PTHR48277">
    <property type="entry name" value="MITOCHONDRIAL RIBOSOMAL PROTEIN S5"/>
    <property type="match status" value="1"/>
</dbReference>
<dbReference type="PANTHER" id="PTHR48277:SF1">
    <property type="entry name" value="MITOCHONDRIAL RIBOSOMAL PROTEIN S5"/>
    <property type="match status" value="1"/>
</dbReference>
<dbReference type="Pfam" id="PF00333">
    <property type="entry name" value="Ribosomal_S5"/>
    <property type="match status" value="1"/>
</dbReference>
<dbReference type="Pfam" id="PF03719">
    <property type="entry name" value="Ribosomal_S5_C"/>
    <property type="match status" value="1"/>
</dbReference>
<dbReference type="SUPFAM" id="SSF54768">
    <property type="entry name" value="dsRNA-binding domain-like"/>
    <property type="match status" value="1"/>
</dbReference>
<dbReference type="SUPFAM" id="SSF54211">
    <property type="entry name" value="Ribosomal protein S5 domain 2-like"/>
    <property type="match status" value="1"/>
</dbReference>
<dbReference type="PROSITE" id="PS50881">
    <property type="entry name" value="S5_DSRBD"/>
    <property type="match status" value="1"/>
</dbReference>
<organism>
    <name type="scientific">Magnetococcus marinus (strain ATCC BAA-1437 / JCM 17883 / MC-1)</name>
    <dbReference type="NCBI Taxonomy" id="156889"/>
    <lineage>
        <taxon>Bacteria</taxon>
        <taxon>Pseudomonadati</taxon>
        <taxon>Pseudomonadota</taxon>
        <taxon>Alphaproteobacteria</taxon>
        <taxon>Magnetococcales</taxon>
        <taxon>Magnetococcaceae</taxon>
        <taxon>Magnetococcus</taxon>
    </lineage>
</organism>
<reference key="1">
    <citation type="journal article" date="2009" name="Appl. Environ. Microbiol.">
        <title>Complete genome sequence of the chemolithoautotrophic marine magnetotactic coccus strain MC-1.</title>
        <authorList>
            <person name="Schubbe S."/>
            <person name="Williams T.J."/>
            <person name="Xie G."/>
            <person name="Kiss H.E."/>
            <person name="Brettin T.S."/>
            <person name="Martinez D."/>
            <person name="Ross C.A."/>
            <person name="Schuler D."/>
            <person name="Cox B.L."/>
            <person name="Nealson K.H."/>
            <person name="Bazylinski D.A."/>
        </authorList>
    </citation>
    <scope>NUCLEOTIDE SEQUENCE [LARGE SCALE GENOMIC DNA]</scope>
    <source>
        <strain>ATCC BAA-1437 / JCM 17883 / MC-1</strain>
    </source>
</reference>
<feature type="chain" id="PRO_0000323153" description="Small ribosomal subunit protein uS5">
    <location>
        <begin position="1"/>
        <end position="177"/>
    </location>
</feature>
<feature type="domain" description="S5 DRBM" evidence="1">
    <location>
        <begin position="19"/>
        <end position="82"/>
    </location>
</feature>
<comment type="function">
    <text evidence="1">With S4 and S12 plays an important role in translational accuracy.</text>
</comment>
<comment type="function">
    <text evidence="1">Located at the back of the 30S subunit body where it stabilizes the conformation of the head with respect to the body.</text>
</comment>
<comment type="subunit">
    <text evidence="1">Part of the 30S ribosomal subunit. Contacts proteins S4 and S8.</text>
</comment>
<comment type="domain">
    <text>The N-terminal domain interacts with the head of the 30S subunit; the C-terminal domain interacts with the body and contacts protein S4. The interaction surface between S4 and S5 is involved in control of translational fidelity.</text>
</comment>
<comment type="similarity">
    <text evidence="1">Belongs to the universal ribosomal protein uS5 family.</text>
</comment>
<name>RS5_MAGMM</name>